<proteinExistence type="inferred from homology"/>
<reference key="1">
    <citation type="submission" date="2007-10" db="EMBL/GenBank/DDBJ databases">
        <title>Complete genome of Alkaliphilus oremlandii OhILAs.</title>
        <authorList>
            <person name="Copeland A."/>
            <person name="Lucas S."/>
            <person name="Lapidus A."/>
            <person name="Barry K."/>
            <person name="Detter J.C."/>
            <person name="Glavina del Rio T."/>
            <person name="Hammon N."/>
            <person name="Israni S."/>
            <person name="Dalin E."/>
            <person name="Tice H."/>
            <person name="Pitluck S."/>
            <person name="Chain P."/>
            <person name="Malfatti S."/>
            <person name="Shin M."/>
            <person name="Vergez L."/>
            <person name="Schmutz J."/>
            <person name="Larimer F."/>
            <person name="Land M."/>
            <person name="Hauser L."/>
            <person name="Kyrpides N."/>
            <person name="Mikhailova N."/>
            <person name="Stolz J.F."/>
            <person name="Dawson A."/>
            <person name="Fisher E."/>
            <person name="Crable B."/>
            <person name="Perera E."/>
            <person name="Lisak J."/>
            <person name="Ranganathan M."/>
            <person name="Basu P."/>
            <person name="Richardson P."/>
        </authorList>
    </citation>
    <scope>NUCLEOTIDE SEQUENCE [LARGE SCALE GENOMIC DNA]</scope>
    <source>
        <strain>OhILAs</strain>
    </source>
</reference>
<name>ERA_ALKOO</name>
<protein>
    <recommendedName>
        <fullName evidence="1">GTPase Era</fullName>
    </recommendedName>
</protein>
<gene>
    <name evidence="1" type="primary">era</name>
    <name type="ordered locus">Clos_1252</name>
</gene>
<sequence>MTFKSGFVTIIGRPNVGKSTLMNKIIGEKIAIMSDKPQTTRNKIQCVYTQKDYQIVFLDTPGIHKPKHKLGQYMVKIATETLKEVDAVLFVVDEGNSIGPGDQYIIDQLQGIDTPIILVLNKIDKMNAENLNHLYDQYEKTGIFKHIIGISALEGANVGNLINLIVQYLPEGPKYFPEHMITDQPERLIVAELIREKILHYTDQEIPHGVAVETSLMKRREGKDIIDINATIYCEKKSHKGIIIGKGGRKLKGIGKSAREDIEKLLGSKVYLELWVKVKEDWRNSENTLRTLGYD</sequence>
<comment type="function">
    <text evidence="1">An essential GTPase that binds both GDP and GTP, with rapid nucleotide exchange. Plays a role in 16S rRNA processing and 30S ribosomal subunit biogenesis and possibly also in cell cycle regulation and energy metabolism.</text>
</comment>
<comment type="subunit">
    <text evidence="1">Monomer.</text>
</comment>
<comment type="subcellular location">
    <subcellularLocation>
        <location>Cytoplasm</location>
    </subcellularLocation>
    <subcellularLocation>
        <location evidence="1">Cell membrane</location>
        <topology evidence="1">Peripheral membrane protein</topology>
    </subcellularLocation>
</comment>
<comment type="similarity">
    <text evidence="1 2">Belongs to the TRAFAC class TrmE-Era-EngA-EngB-Septin-like GTPase superfamily. Era GTPase family.</text>
</comment>
<organism>
    <name type="scientific">Alkaliphilus oremlandii (strain OhILAs)</name>
    <name type="common">Clostridium oremlandii (strain OhILAs)</name>
    <dbReference type="NCBI Taxonomy" id="350688"/>
    <lineage>
        <taxon>Bacteria</taxon>
        <taxon>Bacillati</taxon>
        <taxon>Bacillota</taxon>
        <taxon>Clostridia</taxon>
        <taxon>Peptostreptococcales</taxon>
        <taxon>Natronincolaceae</taxon>
        <taxon>Alkaliphilus</taxon>
    </lineage>
</organism>
<feature type="chain" id="PRO_1000079656" description="GTPase Era">
    <location>
        <begin position="1"/>
        <end position="295"/>
    </location>
</feature>
<feature type="domain" description="Era-type G" evidence="2">
    <location>
        <begin position="4"/>
        <end position="171"/>
    </location>
</feature>
<feature type="domain" description="KH type-2" evidence="1">
    <location>
        <begin position="194"/>
        <end position="280"/>
    </location>
</feature>
<feature type="region of interest" description="G1" evidence="2">
    <location>
        <begin position="12"/>
        <end position="19"/>
    </location>
</feature>
<feature type="region of interest" description="G2" evidence="2">
    <location>
        <begin position="38"/>
        <end position="42"/>
    </location>
</feature>
<feature type="region of interest" description="G3" evidence="2">
    <location>
        <begin position="59"/>
        <end position="62"/>
    </location>
</feature>
<feature type="region of interest" description="G4" evidence="2">
    <location>
        <begin position="121"/>
        <end position="124"/>
    </location>
</feature>
<feature type="region of interest" description="G5" evidence="2">
    <location>
        <begin position="150"/>
        <end position="152"/>
    </location>
</feature>
<feature type="binding site" evidence="1">
    <location>
        <begin position="12"/>
        <end position="19"/>
    </location>
    <ligand>
        <name>GTP</name>
        <dbReference type="ChEBI" id="CHEBI:37565"/>
    </ligand>
</feature>
<feature type="binding site" evidence="1">
    <location>
        <begin position="59"/>
        <end position="63"/>
    </location>
    <ligand>
        <name>GTP</name>
        <dbReference type="ChEBI" id="CHEBI:37565"/>
    </ligand>
</feature>
<feature type="binding site" evidence="1">
    <location>
        <begin position="121"/>
        <end position="124"/>
    </location>
    <ligand>
        <name>GTP</name>
        <dbReference type="ChEBI" id="CHEBI:37565"/>
    </ligand>
</feature>
<accession>A8MG70</accession>
<evidence type="ECO:0000255" key="1">
    <source>
        <dbReference type="HAMAP-Rule" id="MF_00367"/>
    </source>
</evidence>
<evidence type="ECO:0000255" key="2">
    <source>
        <dbReference type="PROSITE-ProRule" id="PRU01050"/>
    </source>
</evidence>
<dbReference type="EMBL" id="CP000853">
    <property type="protein sequence ID" value="ABW18798.1"/>
    <property type="molecule type" value="Genomic_DNA"/>
</dbReference>
<dbReference type="RefSeq" id="WP_012159110.1">
    <property type="nucleotide sequence ID" value="NC_009922.1"/>
</dbReference>
<dbReference type="SMR" id="A8MG70"/>
<dbReference type="STRING" id="350688.Clos_1252"/>
<dbReference type="KEGG" id="aoe:Clos_1252"/>
<dbReference type="eggNOG" id="COG1159">
    <property type="taxonomic scope" value="Bacteria"/>
</dbReference>
<dbReference type="HOGENOM" id="CLU_038009_1_0_9"/>
<dbReference type="OrthoDB" id="9805918at2"/>
<dbReference type="Proteomes" id="UP000000269">
    <property type="component" value="Chromosome"/>
</dbReference>
<dbReference type="GO" id="GO:0005829">
    <property type="term" value="C:cytosol"/>
    <property type="evidence" value="ECO:0007669"/>
    <property type="project" value="TreeGrafter"/>
</dbReference>
<dbReference type="GO" id="GO:0005886">
    <property type="term" value="C:plasma membrane"/>
    <property type="evidence" value="ECO:0007669"/>
    <property type="project" value="UniProtKB-SubCell"/>
</dbReference>
<dbReference type="GO" id="GO:0005525">
    <property type="term" value="F:GTP binding"/>
    <property type="evidence" value="ECO:0007669"/>
    <property type="project" value="UniProtKB-UniRule"/>
</dbReference>
<dbReference type="GO" id="GO:0003924">
    <property type="term" value="F:GTPase activity"/>
    <property type="evidence" value="ECO:0007669"/>
    <property type="project" value="UniProtKB-UniRule"/>
</dbReference>
<dbReference type="GO" id="GO:0043024">
    <property type="term" value="F:ribosomal small subunit binding"/>
    <property type="evidence" value="ECO:0007669"/>
    <property type="project" value="TreeGrafter"/>
</dbReference>
<dbReference type="GO" id="GO:0070181">
    <property type="term" value="F:small ribosomal subunit rRNA binding"/>
    <property type="evidence" value="ECO:0007669"/>
    <property type="project" value="UniProtKB-UniRule"/>
</dbReference>
<dbReference type="GO" id="GO:0000028">
    <property type="term" value="P:ribosomal small subunit assembly"/>
    <property type="evidence" value="ECO:0007669"/>
    <property type="project" value="TreeGrafter"/>
</dbReference>
<dbReference type="CDD" id="cd04163">
    <property type="entry name" value="Era"/>
    <property type="match status" value="1"/>
</dbReference>
<dbReference type="CDD" id="cd22534">
    <property type="entry name" value="KH-II_Era"/>
    <property type="match status" value="1"/>
</dbReference>
<dbReference type="FunFam" id="3.30.300.20:FF:000003">
    <property type="entry name" value="GTPase Era"/>
    <property type="match status" value="1"/>
</dbReference>
<dbReference type="FunFam" id="3.40.50.300:FF:000094">
    <property type="entry name" value="GTPase Era"/>
    <property type="match status" value="1"/>
</dbReference>
<dbReference type="Gene3D" id="3.30.300.20">
    <property type="match status" value="1"/>
</dbReference>
<dbReference type="Gene3D" id="3.40.50.300">
    <property type="entry name" value="P-loop containing nucleotide triphosphate hydrolases"/>
    <property type="match status" value="1"/>
</dbReference>
<dbReference type="HAMAP" id="MF_00367">
    <property type="entry name" value="GTPase_Era"/>
    <property type="match status" value="1"/>
</dbReference>
<dbReference type="InterPro" id="IPR030388">
    <property type="entry name" value="G_ERA_dom"/>
</dbReference>
<dbReference type="InterPro" id="IPR006073">
    <property type="entry name" value="GTP-bd"/>
</dbReference>
<dbReference type="InterPro" id="IPR005662">
    <property type="entry name" value="GTPase_Era-like"/>
</dbReference>
<dbReference type="InterPro" id="IPR015946">
    <property type="entry name" value="KH_dom-like_a/b"/>
</dbReference>
<dbReference type="InterPro" id="IPR004044">
    <property type="entry name" value="KH_dom_type_2"/>
</dbReference>
<dbReference type="InterPro" id="IPR009019">
    <property type="entry name" value="KH_sf_prok-type"/>
</dbReference>
<dbReference type="InterPro" id="IPR027417">
    <property type="entry name" value="P-loop_NTPase"/>
</dbReference>
<dbReference type="InterPro" id="IPR005225">
    <property type="entry name" value="Small_GTP-bd"/>
</dbReference>
<dbReference type="NCBIfam" id="TIGR00436">
    <property type="entry name" value="era"/>
    <property type="match status" value="1"/>
</dbReference>
<dbReference type="NCBIfam" id="NF000908">
    <property type="entry name" value="PRK00089.1"/>
    <property type="match status" value="1"/>
</dbReference>
<dbReference type="NCBIfam" id="TIGR00231">
    <property type="entry name" value="small_GTP"/>
    <property type="match status" value="1"/>
</dbReference>
<dbReference type="PANTHER" id="PTHR42698">
    <property type="entry name" value="GTPASE ERA"/>
    <property type="match status" value="1"/>
</dbReference>
<dbReference type="PANTHER" id="PTHR42698:SF1">
    <property type="entry name" value="GTPASE ERA, MITOCHONDRIAL"/>
    <property type="match status" value="1"/>
</dbReference>
<dbReference type="Pfam" id="PF07650">
    <property type="entry name" value="KH_2"/>
    <property type="match status" value="1"/>
</dbReference>
<dbReference type="Pfam" id="PF01926">
    <property type="entry name" value="MMR_HSR1"/>
    <property type="match status" value="1"/>
</dbReference>
<dbReference type="PRINTS" id="PR00326">
    <property type="entry name" value="GTP1OBG"/>
</dbReference>
<dbReference type="SUPFAM" id="SSF52540">
    <property type="entry name" value="P-loop containing nucleoside triphosphate hydrolases"/>
    <property type="match status" value="1"/>
</dbReference>
<dbReference type="SUPFAM" id="SSF54814">
    <property type="entry name" value="Prokaryotic type KH domain (KH-domain type II)"/>
    <property type="match status" value="1"/>
</dbReference>
<dbReference type="PROSITE" id="PS51713">
    <property type="entry name" value="G_ERA"/>
    <property type="match status" value="1"/>
</dbReference>
<dbReference type="PROSITE" id="PS50823">
    <property type="entry name" value="KH_TYPE_2"/>
    <property type="match status" value="1"/>
</dbReference>
<keyword id="KW-1003">Cell membrane</keyword>
<keyword id="KW-0963">Cytoplasm</keyword>
<keyword id="KW-0342">GTP-binding</keyword>
<keyword id="KW-0472">Membrane</keyword>
<keyword id="KW-0547">Nucleotide-binding</keyword>
<keyword id="KW-1185">Reference proteome</keyword>
<keyword id="KW-0690">Ribosome biogenesis</keyword>
<keyword id="KW-0694">RNA-binding</keyword>
<keyword id="KW-0699">rRNA-binding</keyword>